<comment type="function">
    <text evidence="1 10 11">Serine/threonine-protein kinase which phosphorylates RAB proteins involved in intracellular trafficking (By similarity). Phosphorylates RAB7A; this activity is dependent on protein kinase C (PKC) activation (By similarity). Plays a role in the negative regulation of bone mass, acting through the maturation of osteoclasts (PubMed:23526378, PubMed:27055475).</text>
</comment>
<comment type="catalytic activity">
    <reaction evidence="1">
        <text>L-seryl-[protein] + ATP = O-phospho-L-seryl-[protein] + ADP + H(+)</text>
        <dbReference type="Rhea" id="RHEA:17989"/>
        <dbReference type="Rhea" id="RHEA-COMP:9863"/>
        <dbReference type="Rhea" id="RHEA-COMP:11604"/>
        <dbReference type="ChEBI" id="CHEBI:15378"/>
        <dbReference type="ChEBI" id="CHEBI:29999"/>
        <dbReference type="ChEBI" id="CHEBI:30616"/>
        <dbReference type="ChEBI" id="CHEBI:83421"/>
        <dbReference type="ChEBI" id="CHEBI:456216"/>
        <dbReference type="EC" id="2.7.11.1"/>
    </reaction>
</comment>
<comment type="catalytic activity">
    <reaction evidence="1">
        <text>L-threonyl-[protein] + ATP = O-phospho-L-threonyl-[protein] + ADP + H(+)</text>
        <dbReference type="Rhea" id="RHEA:46608"/>
        <dbReference type="Rhea" id="RHEA-COMP:11060"/>
        <dbReference type="Rhea" id="RHEA-COMP:11605"/>
        <dbReference type="ChEBI" id="CHEBI:15378"/>
        <dbReference type="ChEBI" id="CHEBI:30013"/>
        <dbReference type="ChEBI" id="CHEBI:30616"/>
        <dbReference type="ChEBI" id="CHEBI:61977"/>
        <dbReference type="ChEBI" id="CHEBI:456216"/>
        <dbReference type="EC" id="2.7.11.1"/>
    </reaction>
</comment>
<comment type="cofactor">
    <cofactor evidence="1">
        <name>Mg(2+)</name>
        <dbReference type="ChEBI" id="CHEBI:18420"/>
    </cofactor>
    <cofactor evidence="1">
        <name>Mn(2+)</name>
        <dbReference type="ChEBI" id="CHEBI:29035"/>
    </cofactor>
</comment>
<comment type="activity regulation">
    <text evidence="1">Activated by phosphorylation by PKC (By similarity). Binds both GTP and GDP; binding of GTP stimulates kinase activity (By similarity). Sterically autoinhibited in its dimeric state (By similarity).</text>
</comment>
<comment type="subunit">
    <text evidence="1 10">Homodimer (By similarity). The homodimer is autoinhibited and stabilized by its N-terminal residues and ANK repeats (By similarity). Interacts with CSK (PubMed:23526378).</text>
</comment>
<comment type="subcellular location">
    <subcellularLocation>
        <location evidence="1">Cytoplasm</location>
    </subcellularLocation>
    <subcellularLocation>
        <location>Cell membrane</location>
        <topology evidence="1">Peripheral membrane protein</topology>
    </subcellularLocation>
</comment>
<comment type="alternative products">
    <event type="alternative splicing"/>
    <isoform>
        <id>Q3UHC2-1</id>
        <name evidence="7 9">1</name>
        <sequence type="displayed"/>
    </isoform>
    <isoform>
        <id>Q3UHC2-2</id>
        <name evidence="9">2</name>
        <sequence type="described" ref="VSP_052014"/>
    </isoform>
    <isoform>
        <id>Q3UHC2-3</id>
        <name evidence="8">3</name>
        <sequence type="described" ref="VSP_052013 VSP_052015 VSP_052016"/>
    </isoform>
</comment>
<comment type="tissue specificity">
    <text evidence="10">Expressed in osteoclasts and bone marrow stromal cells.</text>
</comment>
<comment type="PTM">
    <text evidence="1">Autophosphorylated (By similarity). Autophosphorylation in inhibited in its dimeric state (By similarity). Phosphorylated by protein kinase C isozymes PRKCA, PRKCB, PRKCG, PRKCE, PRKCZ and PRKCT at Ser-1064, Ser-1074 and Thr-1075 (By similarity). Phosphorylation at these residues activates the kinase activity of LRRK1 to phosphorylate RAB7A (By similarity).</text>
</comment>
<comment type="disruption phenotype">
    <text evidence="10 11">Knockout mice are born at the expected Mendelian ratio. At 4 weeks of age, their body length is slightly shorter than that of wild-type littermates. They progressively develop severe osteopetrosis, reduced bone resorption in endocortical and trabecular regions, and increased bone mineralization. Knockout animals have lifelong accumulation of bone, and females are resistant to ovariectomy-induced bone loss. Osteoclasts derived from mutant mice form a reduced area of resorption pits compared to controls, suggesting dysfunction of multinucleated osteoclasts. Osteoclast precursors differentiate into multinucleated cells, but fail to form peripheral sealing zones and ruffled borders, and do not resorb bone (PubMed:23526378, PubMed:27055475). These abnormalities are associated with changes in the SRC signaling pathway. This phenotype may be specific LRRK1 ablation, as knockout of the paralogous gene LRRK2 does not show any obvious bone phenotype (PubMed:23526378).</text>
</comment>
<comment type="similarity">
    <text evidence="14">Belongs to the protein kinase superfamily. TKL Ser/Thr protein kinase family. ROCO subfamily.</text>
</comment>
<comment type="sequence caution" evidence="14">
    <conflict type="erroneous initiation">
        <sequence resource="EMBL-CDS" id="AAH27199"/>
    </conflict>
</comment>
<comment type="sequence caution" evidence="14">
    <conflict type="erroneous initiation">
        <sequence resource="EMBL-CDS" id="BAC36341"/>
    </conflict>
</comment>
<comment type="sequence caution" evidence="14">
    <conflict type="erroneous initiation">
        <sequence resource="EMBL-CDS" id="BAC39743"/>
    </conflict>
</comment>
<proteinExistence type="evidence at protein level"/>
<accession>Q3UHC2</accession>
<accession>Q3U476</accession>
<accession>Q66JQ4</accession>
<accession>Q6GQR9</accession>
<accession>Q6NZF5</accession>
<accession>Q6ZPI4</accession>
<accession>Q8BKP3</accession>
<accession>Q8BU93</accession>
<accession>Q8BUY0</accession>
<accession>Q8BVV2</accession>
<accession>Q8R085</accession>
<feature type="chain" id="PRO_0000233378" description="Leucine-rich repeat serine/threonine-protein kinase 1">
    <location>
        <begin position="1"/>
        <end position="2014"/>
    </location>
</feature>
<feature type="repeat" description="ANK 1" evidence="3">
    <location>
        <begin position="51"/>
        <end position="81"/>
    </location>
</feature>
<feature type="repeat" description="ANK 2" evidence="3">
    <location>
        <begin position="86"/>
        <end position="116"/>
    </location>
</feature>
<feature type="repeat" description="ANK 3" evidence="3">
    <location>
        <begin position="119"/>
        <end position="148"/>
    </location>
</feature>
<feature type="repeat" description="ANK 4" evidence="3">
    <location>
        <begin position="152"/>
        <end position="182"/>
    </location>
</feature>
<feature type="repeat" description="ANK 5" evidence="3">
    <location>
        <begin position="193"/>
        <end position="222"/>
    </location>
</feature>
<feature type="repeat" description="LRR 1" evidence="3">
    <location>
        <begin position="279"/>
        <end position="300"/>
    </location>
</feature>
<feature type="repeat" description="LRR 2" evidence="3">
    <location>
        <begin position="303"/>
        <end position="324"/>
    </location>
</feature>
<feature type="repeat" description="LRR 3" evidence="3">
    <location>
        <begin position="330"/>
        <end position="351"/>
    </location>
</feature>
<feature type="repeat" description="LRR 4" evidence="3">
    <location>
        <begin position="353"/>
        <end position="374"/>
    </location>
</feature>
<feature type="repeat" description="LRR 5" evidence="3">
    <location>
        <begin position="381"/>
        <end position="402"/>
    </location>
</feature>
<feature type="repeat" description="LRR 6" evidence="3">
    <location>
        <begin position="405"/>
        <end position="426"/>
    </location>
</feature>
<feature type="repeat" description="LRR 7" evidence="3">
    <location>
        <begin position="427"/>
        <end position="447"/>
    </location>
</feature>
<feature type="repeat" description="LRR 8" evidence="3">
    <location>
        <begin position="451"/>
        <end position="472"/>
    </location>
</feature>
<feature type="repeat" description="LRR 9" evidence="3">
    <location>
        <begin position="474"/>
        <end position="495"/>
    </location>
</feature>
<feature type="repeat" description="LRR 10" evidence="3">
    <location>
        <begin position="498"/>
        <end position="519"/>
    </location>
</feature>
<feature type="repeat" description="LRR 11" evidence="3">
    <location>
        <begin position="549"/>
        <end position="570"/>
    </location>
</feature>
<feature type="repeat" description="LRR 12" evidence="3">
    <location>
        <begin position="572"/>
        <end position="594"/>
    </location>
</feature>
<feature type="repeat" description="LRR 13" evidence="3">
    <location>
        <begin position="596"/>
        <end position="617"/>
    </location>
</feature>
<feature type="domain" description="Roc" evidence="5">
    <location>
        <begin position="632"/>
        <end position="826"/>
    </location>
</feature>
<feature type="domain" description="COR" evidence="3">
    <location>
        <begin position="840"/>
        <end position="1237"/>
    </location>
</feature>
<feature type="domain" description="Protein kinase" evidence="4">
    <location>
        <begin position="1242"/>
        <end position="1525"/>
    </location>
</feature>
<feature type="repeat" description="WD 1" evidence="1">
    <location>
        <begin position="1539"/>
        <end position="1579"/>
    </location>
</feature>
<feature type="repeat" description="WD 2" evidence="1">
    <location>
        <begin position="1582"/>
        <end position="1622"/>
    </location>
</feature>
<feature type="repeat" description="WD 3" evidence="1">
    <location>
        <begin position="1623"/>
        <end position="1668"/>
    </location>
</feature>
<feature type="repeat" description="WD 4" evidence="1">
    <location>
        <begin position="1693"/>
        <end position="1729"/>
    </location>
</feature>
<feature type="repeat" description="WD 5" evidence="1">
    <location>
        <begin position="1730"/>
        <end position="1778"/>
    </location>
</feature>
<feature type="repeat" description="WD 6" evidence="1">
    <location>
        <begin position="1779"/>
        <end position="1948"/>
    </location>
</feature>
<feature type="repeat" description="WD 7" evidence="1">
    <location>
        <begin position="1950"/>
        <end position="1986"/>
    </location>
</feature>
<feature type="region of interest" description="WD40 loop; involved in dimer stabilization" evidence="1">
    <location>
        <begin position="1791"/>
        <end position="1906"/>
    </location>
</feature>
<feature type="region of interest" description="Disordered" evidence="6">
    <location>
        <begin position="1839"/>
        <end position="1895"/>
    </location>
</feature>
<feature type="compositionally biased region" description="Low complexity" evidence="6">
    <location>
        <begin position="1853"/>
        <end position="1871"/>
    </location>
</feature>
<feature type="active site" description="Proton acceptor" evidence="2">
    <location>
        <position position="1386"/>
    </location>
</feature>
<feature type="binding site" evidence="1">
    <location>
        <position position="647"/>
    </location>
    <ligand>
        <name>GDP</name>
        <dbReference type="ChEBI" id="CHEBI:58189"/>
    </ligand>
</feature>
<feature type="binding site" evidence="1">
    <location>
        <position position="648"/>
    </location>
    <ligand>
        <name>GDP</name>
        <dbReference type="ChEBI" id="CHEBI:58189"/>
    </ligand>
</feature>
<feature type="binding site" evidence="1">
    <location>
        <position position="650"/>
    </location>
    <ligand>
        <name>GDP</name>
        <dbReference type="ChEBI" id="CHEBI:58189"/>
    </ligand>
</feature>
<feature type="binding site" evidence="1">
    <location>
        <position position="651"/>
    </location>
    <ligand>
        <name>GDP</name>
        <dbReference type="ChEBI" id="CHEBI:58189"/>
    </ligand>
</feature>
<feature type="binding site" evidence="1">
    <location>
        <position position="652"/>
    </location>
    <ligand>
        <name>GDP</name>
        <dbReference type="ChEBI" id="CHEBI:58189"/>
    </ligand>
</feature>
<feature type="binding site" evidence="1">
    <location>
        <position position="653"/>
    </location>
    <ligand>
        <name>GDP</name>
        <dbReference type="ChEBI" id="CHEBI:58189"/>
    </ligand>
</feature>
<feature type="binding site" evidence="1">
    <location>
        <position position="670"/>
    </location>
    <ligand>
        <name>GDP</name>
        <dbReference type="ChEBI" id="CHEBI:58189"/>
    </ligand>
</feature>
<feature type="binding site" evidence="1">
    <location>
        <position position="758"/>
    </location>
    <ligand>
        <name>GDP</name>
        <dbReference type="ChEBI" id="CHEBI:58189"/>
    </ligand>
</feature>
<feature type="binding site" evidence="1">
    <location>
        <position position="760"/>
    </location>
    <ligand>
        <name>GDP</name>
        <dbReference type="ChEBI" id="CHEBI:58189"/>
    </ligand>
</feature>
<feature type="binding site" evidence="1">
    <location>
        <position position="806"/>
    </location>
    <ligand>
        <name>GDP</name>
        <dbReference type="ChEBI" id="CHEBI:58189"/>
    </ligand>
</feature>
<feature type="binding site" evidence="1">
    <location>
        <position position="807"/>
    </location>
    <ligand>
        <name>GDP</name>
        <dbReference type="ChEBI" id="CHEBI:58189"/>
    </ligand>
</feature>
<feature type="binding site" evidence="2">
    <location>
        <begin position="1248"/>
        <end position="1256"/>
    </location>
    <ligand>
        <name>ATP</name>
        <dbReference type="ChEBI" id="CHEBI:30616"/>
    </ligand>
</feature>
<feature type="binding site" evidence="1">
    <location>
        <position position="1270"/>
    </location>
    <ligand>
        <name>ATP</name>
        <dbReference type="ChEBI" id="CHEBI:30616"/>
    </ligand>
</feature>
<feature type="modified residue" description="Phosphothreonine" evidence="1">
    <location>
        <position position="1061"/>
    </location>
</feature>
<feature type="modified residue" description="Phosphoserine" evidence="1">
    <location>
        <position position="1064"/>
    </location>
</feature>
<feature type="modified residue" description="Phosphoserine" evidence="1">
    <location>
        <position position="1074"/>
    </location>
</feature>
<feature type="modified residue" description="Phosphothreonine" evidence="1">
    <location>
        <position position="1075"/>
    </location>
</feature>
<feature type="splice variant" id="VSP_052014" description="In isoform 2." evidence="13">
    <location>
        <begin position="1"/>
        <end position="1610"/>
    </location>
</feature>
<feature type="splice variant" id="VSP_052013" description="In isoform 3." evidence="12">
    <location>
        <begin position="1"/>
        <end position="36"/>
    </location>
</feature>
<feature type="splice variant" id="VSP_052015" description="In isoform 3." evidence="12">
    <location>
        <begin position="1153"/>
        <end position="1979"/>
    </location>
</feature>
<feature type="splice variant" id="VSP_052016" description="In isoform 3." evidence="12">
    <original>SYEELGRLEACTRKRR</original>
    <variation>LPHQLFQCAFLCQL</variation>
    <location>
        <begin position="1999"/>
        <end position="2014"/>
    </location>
</feature>
<feature type="sequence conflict" description="In Ref. 1; BAC34581." evidence="14" ref="1">
    <original>N</original>
    <variation>D</variation>
    <location>
        <position position="66"/>
    </location>
</feature>
<feature type="sequence conflict" description="In Ref. 3." evidence="14" ref="3">
    <original>Q</original>
    <variation>R</variation>
    <location>
        <position position="950"/>
    </location>
</feature>
<feature type="sequence conflict" description="In Ref. 1; BAE32558 and 3." evidence="14" ref="1 3">
    <original>A</original>
    <variation>T</variation>
    <location>
        <position position="1539"/>
    </location>
</feature>
<feature type="sequence conflict" description="In Ref. 2; AAH27199." evidence="14" ref="2">
    <original>V</original>
    <variation>L</variation>
    <location>
        <position position="1751"/>
    </location>
</feature>
<feature type="sequence conflict" description="In Ref. 1; BAE32558, 2; AAH80819 and 3." evidence="14" ref="1 2 3">
    <original>G</original>
    <variation>E</variation>
    <location>
        <position position="1806"/>
    </location>
</feature>
<feature type="sequence conflict" description="In Ref. 1; BAE32558, 2; AAH80819 and 3." evidence="14" ref="1 2 3">
    <original>S</original>
    <variation>N</variation>
    <location>
        <position position="1903"/>
    </location>
</feature>
<feature type="sequence conflict" description="In Ref. 1; BAE32558, 2; AAH80819 and 3." evidence="14" ref="1 2 3">
    <original>G</original>
    <variation>S</variation>
    <location>
        <position position="1931"/>
    </location>
</feature>
<feature type="sequence conflict" description="In Ref. 1; BAE32558, 2; AAH27199/AAH80819 and 3." evidence="14" ref="1 2 3">
    <original>S</original>
    <variation>G</variation>
    <location>
        <position position="1972"/>
    </location>
</feature>
<reference evidence="14 24" key="1">
    <citation type="journal article" date="2005" name="Science">
        <title>The transcriptional landscape of the mammalian genome.</title>
        <authorList>
            <person name="Carninci P."/>
            <person name="Kasukawa T."/>
            <person name="Katayama S."/>
            <person name="Gough J."/>
            <person name="Frith M.C."/>
            <person name="Maeda N."/>
            <person name="Oyama R."/>
            <person name="Ravasi T."/>
            <person name="Lenhard B."/>
            <person name="Wells C."/>
            <person name="Kodzius R."/>
            <person name="Shimokawa K."/>
            <person name="Bajic V.B."/>
            <person name="Brenner S.E."/>
            <person name="Batalov S."/>
            <person name="Forrest A.R."/>
            <person name="Zavolan M."/>
            <person name="Davis M.J."/>
            <person name="Wilming L.G."/>
            <person name="Aidinis V."/>
            <person name="Allen J.E."/>
            <person name="Ambesi-Impiombato A."/>
            <person name="Apweiler R."/>
            <person name="Aturaliya R.N."/>
            <person name="Bailey T.L."/>
            <person name="Bansal M."/>
            <person name="Baxter L."/>
            <person name="Beisel K.W."/>
            <person name="Bersano T."/>
            <person name="Bono H."/>
            <person name="Chalk A.M."/>
            <person name="Chiu K.P."/>
            <person name="Choudhary V."/>
            <person name="Christoffels A."/>
            <person name="Clutterbuck D.R."/>
            <person name="Crowe M.L."/>
            <person name="Dalla E."/>
            <person name="Dalrymple B.P."/>
            <person name="de Bono B."/>
            <person name="Della Gatta G."/>
            <person name="di Bernardo D."/>
            <person name="Down T."/>
            <person name="Engstrom P."/>
            <person name="Fagiolini M."/>
            <person name="Faulkner G."/>
            <person name="Fletcher C.F."/>
            <person name="Fukushima T."/>
            <person name="Furuno M."/>
            <person name="Futaki S."/>
            <person name="Gariboldi M."/>
            <person name="Georgii-Hemming P."/>
            <person name="Gingeras T.R."/>
            <person name="Gojobori T."/>
            <person name="Green R.E."/>
            <person name="Gustincich S."/>
            <person name="Harbers M."/>
            <person name="Hayashi Y."/>
            <person name="Hensch T.K."/>
            <person name="Hirokawa N."/>
            <person name="Hill D."/>
            <person name="Huminiecki L."/>
            <person name="Iacono M."/>
            <person name="Ikeo K."/>
            <person name="Iwama A."/>
            <person name="Ishikawa T."/>
            <person name="Jakt M."/>
            <person name="Kanapin A."/>
            <person name="Katoh M."/>
            <person name="Kawasawa Y."/>
            <person name="Kelso J."/>
            <person name="Kitamura H."/>
            <person name="Kitano H."/>
            <person name="Kollias G."/>
            <person name="Krishnan S.P."/>
            <person name="Kruger A."/>
            <person name="Kummerfeld S.K."/>
            <person name="Kurochkin I.V."/>
            <person name="Lareau L.F."/>
            <person name="Lazarevic D."/>
            <person name="Lipovich L."/>
            <person name="Liu J."/>
            <person name="Liuni S."/>
            <person name="McWilliam S."/>
            <person name="Madan Babu M."/>
            <person name="Madera M."/>
            <person name="Marchionni L."/>
            <person name="Matsuda H."/>
            <person name="Matsuzawa S."/>
            <person name="Miki H."/>
            <person name="Mignone F."/>
            <person name="Miyake S."/>
            <person name="Morris K."/>
            <person name="Mottagui-Tabar S."/>
            <person name="Mulder N."/>
            <person name="Nakano N."/>
            <person name="Nakauchi H."/>
            <person name="Ng P."/>
            <person name="Nilsson R."/>
            <person name="Nishiguchi S."/>
            <person name="Nishikawa S."/>
            <person name="Nori F."/>
            <person name="Ohara O."/>
            <person name="Okazaki Y."/>
            <person name="Orlando V."/>
            <person name="Pang K.C."/>
            <person name="Pavan W.J."/>
            <person name="Pavesi G."/>
            <person name="Pesole G."/>
            <person name="Petrovsky N."/>
            <person name="Piazza S."/>
            <person name="Reed J."/>
            <person name="Reid J.F."/>
            <person name="Ring B.Z."/>
            <person name="Ringwald M."/>
            <person name="Rost B."/>
            <person name="Ruan Y."/>
            <person name="Salzberg S.L."/>
            <person name="Sandelin A."/>
            <person name="Schneider C."/>
            <person name="Schoenbach C."/>
            <person name="Sekiguchi K."/>
            <person name="Semple C.A."/>
            <person name="Seno S."/>
            <person name="Sessa L."/>
            <person name="Sheng Y."/>
            <person name="Shibata Y."/>
            <person name="Shimada H."/>
            <person name="Shimada K."/>
            <person name="Silva D."/>
            <person name="Sinclair B."/>
            <person name="Sperling S."/>
            <person name="Stupka E."/>
            <person name="Sugiura K."/>
            <person name="Sultana R."/>
            <person name="Takenaka Y."/>
            <person name="Taki K."/>
            <person name="Tammoja K."/>
            <person name="Tan S.L."/>
            <person name="Tang S."/>
            <person name="Taylor M.S."/>
            <person name="Tegner J."/>
            <person name="Teichmann S.A."/>
            <person name="Ueda H.R."/>
            <person name="van Nimwegen E."/>
            <person name="Verardo R."/>
            <person name="Wei C.L."/>
            <person name="Yagi K."/>
            <person name="Yamanishi H."/>
            <person name="Zabarovsky E."/>
            <person name="Zhu S."/>
            <person name="Zimmer A."/>
            <person name="Hide W."/>
            <person name="Bult C."/>
            <person name="Grimmond S.M."/>
            <person name="Teasdale R.D."/>
            <person name="Liu E.T."/>
            <person name="Brusic V."/>
            <person name="Quackenbush J."/>
            <person name="Wahlestedt C."/>
            <person name="Mattick J.S."/>
            <person name="Hume D.A."/>
            <person name="Kai C."/>
            <person name="Sasaki D."/>
            <person name="Tomaru Y."/>
            <person name="Fukuda S."/>
            <person name="Kanamori-Katayama M."/>
            <person name="Suzuki M."/>
            <person name="Aoki J."/>
            <person name="Arakawa T."/>
            <person name="Iida J."/>
            <person name="Imamura K."/>
            <person name="Itoh M."/>
            <person name="Kato T."/>
            <person name="Kawaji H."/>
            <person name="Kawagashira N."/>
            <person name="Kawashima T."/>
            <person name="Kojima M."/>
            <person name="Kondo S."/>
            <person name="Konno H."/>
            <person name="Nakano K."/>
            <person name="Ninomiya N."/>
            <person name="Nishio T."/>
            <person name="Okada M."/>
            <person name="Plessy C."/>
            <person name="Shibata K."/>
            <person name="Shiraki T."/>
            <person name="Suzuki S."/>
            <person name="Tagami M."/>
            <person name="Waki K."/>
            <person name="Watahiki A."/>
            <person name="Okamura-Oho Y."/>
            <person name="Suzuki H."/>
            <person name="Kawai J."/>
            <person name="Hayashizaki Y."/>
        </authorList>
    </citation>
    <scope>NUCLEOTIDE SEQUENCE [LARGE SCALE MRNA] (ISOFORMS 1 AND 2)</scope>
    <source>
        <strain evidence="24">C57BL/6J</strain>
        <strain evidence="25">NOD</strain>
        <tissue evidence="25">Dendritic cell</tissue>
        <tissue evidence="21">Fetal head</tissue>
        <tissue evidence="20">Head</tissue>
        <tissue evidence="22">Lung</tissue>
        <tissue evidence="19">Spinal ganglion</tissue>
    </source>
</reference>
<reference evidence="14 15" key="2">
    <citation type="journal article" date="2004" name="Genome Res.">
        <title>The status, quality, and expansion of the NIH full-length cDNA project: the Mammalian Gene Collection (MGC).</title>
        <authorList>
            <consortium name="The MGC Project Team"/>
        </authorList>
    </citation>
    <scope>NUCLEOTIDE SEQUENCE [LARGE SCALE MRNA] (ISOFORM 3)</scope>
    <scope>NUCLEOTIDE SEQUENCE [LARGE SCALE MRNA] OF 1632-2014 (ISOFORMS 1/2)</scope>
    <source>
        <strain evidence="16">C57BL/6J</strain>
        <strain evidence="15">FVB/N</strain>
        <tissue evidence="17">Brain</tissue>
        <tissue evidence="15">Colon</tissue>
        <tissue evidence="18">Jaw</tissue>
        <tissue evidence="16">Kidney</tissue>
    </source>
</reference>
<reference evidence="14 23" key="3">
    <citation type="journal article" date="2003" name="DNA Res.">
        <title>Prediction of the coding sequences of mouse homologues of KIAA gene: III. The complete nucleotide sequences of 500 mouse KIAA-homologous cDNAs identified by screening of terminal sequences of cDNA clones randomly sampled from size-fractionated libraries.</title>
        <authorList>
            <person name="Okazaki N."/>
            <person name="Kikuno R."/>
            <person name="Ohara R."/>
            <person name="Inamoto S."/>
            <person name="Koseki H."/>
            <person name="Hiraoka S."/>
            <person name="Saga Y."/>
            <person name="Nagase T."/>
            <person name="Ohara O."/>
            <person name="Koga H."/>
        </authorList>
    </citation>
    <scope>NUCLEOTIDE SEQUENCE [LARGE SCALE MRNA] OF 117-2014 (ISOFORM 1)</scope>
    <source>
        <tissue evidence="23">Embryonic tail</tissue>
    </source>
</reference>
<reference key="4">
    <citation type="journal article" date="2010" name="Cell">
        <title>A tissue-specific atlas of mouse protein phosphorylation and expression.</title>
        <authorList>
            <person name="Huttlin E.L."/>
            <person name="Jedrychowski M.P."/>
            <person name="Elias J.E."/>
            <person name="Goswami T."/>
            <person name="Rad R."/>
            <person name="Beausoleil S.A."/>
            <person name="Villen J."/>
            <person name="Haas W."/>
            <person name="Sowa M.E."/>
            <person name="Gygi S.P."/>
        </authorList>
    </citation>
    <scope>IDENTIFICATION BY MASS SPECTROMETRY [LARGE SCALE ANALYSIS]</scope>
    <source>
        <tissue>Pancreas</tissue>
        <tissue>Spleen</tissue>
    </source>
</reference>
<reference key="5">
    <citation type="journal article" date="2013" name="J. Bone Miner. Res.">
        <title>Targeted disruption of leucine-rich repeat kinase 1 but not leucine-rich repeat kinase 2 in mice causes severe osteopetrosis.</title>
        <authorList>
            <person name="Xing W."/>
            <person name="Liu J."/>
            <person name="Cheng S."/>
            <person name="Vogel P."/>
            <person name="Mohan S."/>
            <person name="Brommage R."/>
        </authorList>
    </citation>
    <scope>FUNCTION</scope>
    <scope>INTERACTION WITH CSK</scope>
    <scope>TISSUE SPECIFICITY</scope>
    <scope>DISRUPTION PHENOTYPE</scope>
</reference>
<reference key="6">
    <citation type="journal article" date="2016" name="J. Med. Genet.">
        <title>Identification of biallelic LRRK1 mutations in osteosclerotic metaphyseal dysplasia and evidence for locus heterogeneity.</title>
        <authorList>
            <person name="Iida A."/>
            <person name="Xing W."/>
            <person name="Docx M.K."/>
            <person name="Nakashima T."/>
            <person name="Wang Z."/>
            <person name="Kimizuka M."/>
            <person name="Van Hul W."/>
            <person name="Rating D."/>
            <person name="Spranger J."/>
            <person name="Ohashi H."/>
            <person name="Miyake N."/>
            <person name="Matsumoto N."/>
            <person name="Mohan S."/>
            <person name="Nishimura G."/>
            <person name="Mortier G."/>
            <person name="Ikegawa S."/>
        </authorList>
    </citation>
    <scope>FUNCTION</scope>
    <scope>DISRUPTION PHENOTYPE</scope>
</reference>
<keyword id="KW-0025">Alternative splicing</keyword>
<keyword id="KW-0040">ANK repeat</keyword>
<keyword id="KW-0067">ATP-binding</keyword>
<keyword id="KW-1003">Cell membrane</keyword>
<keyword id="KW-0963">Cytoplasm</keyword>
<keyword id="KW-0342">GTP-binding</keyword>
<keyword id="KW-0418">Kinase</keyword>
<keyword id="KW-0433">Leucine-rich repeat</keyword>
<keyword id="KW-0460">Magnesium</keyword>
<keyword id="KW-0464">Manganese</keyword>
<keyword id="KW-0472">Membrane</keyword>
<keyword id="KW-0479">Metal-binding</keyword>
<keyword id="KW-0547">Nucleotide-binding</keyword>
<keyword id="KW-0597">Phosphoprotein</keyword>
<keyword id="KW-1185">Reference proteome</keyword>
<keyword id="KW-0677">Repeat</keyword>
<keyword id="KW-0723">Serine/threonine-protein kinase</keyword>
<keyword id="KW-0808">Transferase</keyword>
<keyword id="KW-0853">WD repeat</keyword>
<sequence length="2014" mass="225470">MAGTSQRPPSMYWCVGTEGLAVCPGPAMETHNGAEDMGSKLSLPGGSSTVQCPSMEEIHTAYKQRNLSRARDLLRGVCEESESSQEKGQLLSIAAAHGDLETVQFLLTEKRVELPTEPTDDNPAVVAAHFGHAEVVRELLESLPGPCTPQRLLNWMLALACQRGHLEVVKLLVLTHGADPENYAVRKNEFPVIVRLPLYAAIKAGNEDIAIFLLRHGAYFCSYILLDSPEPSKHLLRKYFIEASALPSSYPGKIALRVKWSHLKLPWVDLDWLLDISCQITELDLSANCLPSLPSIIPWGLINLKKLNLSNNQLGELPCVQSSDEIICSRLLEIDISSNKLSHLPPGFLHLSKLQKLTASKNYLERLFEEENATNWIGLRKLQELDLADNRLTELPVQFMHSFKSLTSLNVSRNNLKSFPDPWSCPLKCCKASKNALESLPDKMAVFWKSHLRDADFSENSLKEVPLGLFQLDALMFLRLQGNQLLSLPPQEKWTCTQLKTLDLSRNQLGKNEDGLKTKRISLFTTRGRQRSGTETASMLEFPAFLSESLEVLCLNDNHLDAVPPSVCLLKNLSELYLGNNPGLRELPPELGQLGNLWQLDIEDLNISNVPAEVRKEGPKATLSFLRAQLRKAEKCKLMKMILVGPPRQGKSTLLEILQTGKAPQLAHSEATIRTTKWELQRPAGSKAKVESVEFNVWDIGGPASMATVNQCFFTDKALYVVVWNLALGEEAVANLQFWLLNIEAKAPNAVVLVVGTHLDLIEAKFRVERIATLRAYVLALCRSPSGSRATGFPDITFKHLHEISCKNLEGQEGLRQLIFHVTCNMKDVGSTIGCQKLAGRLIPRSYISLQEAVLAEQQRRSLGDQVQYLTDRQLDQLVEQTPGNDIKDYEDLQSAISFLIETGTLLHFPDTSHGLRNLYFLDPIWLSECLQRIFNIKGSRSVAKNGVIQAEDLRMLLVGTGFTQQTEEQYFQFLAKFEIALPVANDSYLLPHLLPSKPGLDTHSMRHPMANTIQRVFKMSFVPVGFWQRFIARMLISLAEMDLQLFENKKNTKSRNRKVTIYSFTGSQRNRCSTFRVRRNQTIYWQEGLLVTFDGGYLSVESSDVNWKKKKSGGIKIICQSEMRDFSAMAFITDHVNSLIDQWFPALTATESDGTPLMEQYVPCPVCEASWAQHADPNERSESVQYFDMEDCVLTAIERDFISCPRHPDLPVPLQELVPELFMTDFPARLFLENSKLEHTEGENSILGQGGSGTVIYQARYQGQPVAVKRFHIKKFKNSANAPADTMLRHLRAMDAMKNFSDFRQEASMLHALQHPCIVSLIGISIHPLCFALELAPLGSLNTVLSENAKDSSFMPLGHMLTQKIAYQIASGLAYLHKKNIIFCDLKSDNILVWSLSAKEHINIKLSDYGISRQSFHEGALGVEGTPGYQAPEIRPRIVYDEKVDMFSYGMVLYELLSGQRPALGHHQLQIVKKLSKGIRPVLGQPEEVQFHRLQALMMECWDTKPEKRPLALSVVSQMKDPTFATFMYMLPCGKQSAFFSSQSQEYTVVFWDGKEESRNYTVVNTEKGLLEVQRMTCPGMKLSCQLKVQSSVWIATEDQKIYIYSLKGMCPLSVPQQALDTPAVVTCFLAVPVIKKNSFLVLAGLADGLVAVFPVARGTPKESCSYLCSHTANRSKFCIPDEDARQNPYPVKAMEVVNSGSEVWYSNGPGLLVIDCTILDISRRLEPYAAPSMVTSLVCSSDCRGEEMVWCLDDKANCLVMYHSATYQLCARYFCGDPNPLRDTFSVQPSVLETPGSHKTTSKGPVEECIADVSIMYSEELGTQILTHQDSLTDYCSMSSYSSSPPHQDPRSPSSLPSSLTSYSSVPFSANYEDSDRLQEPSVTSDRTEHDLSPMDGETFSQHLQAVKVLAVKDLIWVPRHGGDIIVIGLEKDSGAQRGRVIAVLKARELNRHGVLVDAAVVAKDTVVCSFANENTEWCLAVWRGWGAREFDIFYQSYEELGRLEACTRKRR</sequence>
<gene>
    <name evidence="26" type="primary">Lrrk1</name>
    <name type="synonym">Kiaa1790</name>
</gene>
<evidence type="ECO:0000250" key="1">
    <source>
        <dbReference type="UniProtKB" id="Q38SD2"/>
    </source>
</evidence>
<evidence type="ECO:0000250" key="2">
    <source>
        <dbReference type="UniProtKB" id="Q5S007"/>
    </source>
</evidence>
<evidence type="ECO:0000255" key="3"/>
<evidence type="ECO:0000255" key="4">
    <source>
        <dbReference type="PROSITE-ProRule" id="PRU00159"/>
    </source>
</evidence>
<evidence type="ECO:0000255" key="5">
    <source>
        <dbReference type="PROSITE-ProRule" id="PRU00758"/>
    </source>
</evidence>
<evidence type="ECO:0000256" key="6">
    <source>
        <dbReference type="SAM" id="MobiDB-lite"/>
    </source>
</evidence>
<evidence type="ECO:0000269" key="7">
    <source>
    </source>
</evidence>
<evidence type="ECO:0000269" key="8">
    <source>
    </source>
</evidence>
<evidence type="ECO:0000269" key="9">
    <source>
    </source>
</evidence>
<evidence type="ECO:0000269" key="10">
    <source>
    </source>
</evidence>
<evidence type="ECO:0000269" key="11">
    <source>
    </source>
</evidence>
<evidence type="ECO:0000303" key="12">
    <source>
    </source>
</evidence>
<evidence type="ECO:0000303" key="13">
    <source>
    </source>
</evidence>
<evidence type="ECO:0000305" key="14"/>
<evidence type="ECO:0000312" key="15">
    <source>
        <dbReference type="EMBL" id="AAH27199.1"/>
    </source>
</evidence>
<evidence type="ECO:0000312" key="16">
    <source>
        <dbReference type="EMBL" id="AAH66159.1"/>
    </source>
</evidence>
<evidence type="ECO:0000312" key="17">
    <source>
        <dbReference type="EMBL" id="AAH72664.1"/>
    </source>
</evidence>
<evidence type="ECO:0000312" key="18">
    <source>
        <dbReference type="EMBL" id="AAH80819.1"/>
    </source>
</evidence>
<evidence type="ECO:0000312" key="19">
    <source>
        <dbReference type="EMBL" id="BAC34581.1"/>
    </source>
</evidence>
<evidence type="ECO:0000312" key="20">
    <source>
        <dbReference type="EMBL" id="BAC36341.1"/>
    </source>
</evidence>
<evidence type="ECO:0000312" key="21">
    <source>
        <dbReference type="EMBL" id="BAC38349.1"/>
    </source>
</evidence>
<evidence type="ECO:0000312" key="22">
    <source>
        <dbReference type="EMBL" id="BAC39743.1"/>
    </source>
</evidence>
<evidence type="ECO:0000312" key="23">
    <source>
        <dbReference type="EMBL" id="BAC98251.1"/>
    </source>
</evidence>
<evidence type="ECO:0000312" key="24">
    <source>
        <dbReference type="EMBL" id="BAE27935.1"/>
    </source>
</evidence>
<evidence type="ECO:0000312" key="25">
    <source>
        <dbReference type="EMBL" id="BAE32558.1"/>
    </source>
</evidence>
<evidence type="ECO:0000312" key="26">
    <source>
        <dbReference type="MGI" id="MGI:2142227"/>
    </source>
</evidence>
<name>LRRK1_MOUSE</name>
<organism>
    <name type="scientific">Mus musculus</name>
    <name type="common">Mouse</name>
    <dbReference type="NCBI Taxonomy" id="10090"/>
    <lineage>
        <taxon>Eukaryota</taxon>
        <taxon>Metazoa</taxon>
        <taxon>Chordata</taxon>
        <taxon>Craniata</taxon>
        <taxon>Vertebrata</taxon>
        <taxon>Euteleostomi</taxon>
        <taxon>Mammalia</taxon>
        <taxon>Eutheria</taxon>
        <taxon>Euarchontoglires</taxon>
        <taxon>Glires</taxon>
        <taxon>Rodentia</taxon>
        <taxon>Myomorpha</taxon>
        <taxon>Muroidea</taxon>
        <taxon>Muridae</taxon>
        <taxon>Murinae</taxon>
        <taxon>Mus</taxon>
        <taxon>Mus</taxon>
    </lineage>
</organism>
<dbReference type="EC" id="2.7.11.1" evidence="1"/>
<dbReference type="EMBL" id="AK051264">
    <property type="protein sequence ID" value="BAC34581.1"/>
    <property type="molecule type" value="mRNA"/>
</dbReference>
<dbReference type="EMBL" id="AK076432">
    <property type="protein sequence ID" value="BAC36341.1"/>
    <property type="status" value="ALT_INIT"/>
    <property type="molecule type" value="mRNA"/>
</dbReference>
<dbReference type="EMBL" id="AK081849">
    <property type="protein sequence ID" value="BAC38349.1"/>
    <property type="molecule type" value="mRNA"/>
</dbReference>
<dbReference type="EMBL" id="AK086795">
    <property type="protein sequence ID" value="BAC39743.1"/>
    <property type="status" value="ALT_INIT"/>
    <property type="molecule type" value="mRNA"/>
</dbReference>
<dbReference type="EMBL" id="AK147469">
    <property type="protein sequence ID" value="BAE27935.1"/>
    <property type="molecule type" value="mRNA"/>
</dbReference>
<dbReference type="EMBL" id="AK154395">
    <property type="protein sequence ID" value="BAE32558.1"/>
    <property type="molecule type" value="mRNA"/>
</dbReference>
<dbReference type="EMBL" id="BC027199">
    <property type="protein sequence ID" value="AAH27199.1"/>
    <property type="status" value="ALT_INIT"/>
    <property type="molecule type" value="mRNA"/>
</dbReference>
<dbReference type="EMBL" id="BC066159">
    <property type="protein sequence ID" value="AAH66159.1"/>
    <property type="molecule type" value="mRNA"/>
</dbReference>
<dbReference type="EMBL" id="BC072664">
    <property type="protein sequence ID" value="AAH72664.1"/>
    <property type="molecule type" value="mRNA"/>
</dbReference>
<dbReference type="EMBL" id="BC080819">
    <property type="protein sequence ID" value="AAH80819.1"/>
    <property type="molecule type" value="mRNA"/>
</dbReference>
<dbReference type="EMBL" id="AK129441">
    <property type="protein sequence ID" value="BAC98251.1"/>
    <property type="molecule type" value="mRNA"/>
</dbReference>
<dbReference type="CCDS" id="CCDS21344.1">
    <molecule id="Q3UHC2-1"/>
</dbReference>
<dbReference type="RefSeq" id="NP_666303.3">
    <molecule id="Q3UHC2-1"/>
    <property type="nucleotide sequence ID" value="NM_146191.3"/>
</dbReference>
<dbReference type="SMR" id="Q3UHC2"/>
<dbReference type="BioGRID" id="231403">
    <property type="interactions" value="6"/>
</dbReference>
<dbReference type="FunCoup" id="Q3UHC2">
    <property type="interactions" value="2720"/>
</dbReference>
<dbReference type="IntAct" id="Q3UHC2">
    <property type="interactions" value="2"/>
</dbReference>
<dbReference type="STRING" id="10090.ENSMUSP00000015277"/>
<dbReference type="GlyGen" id="Q3UHC2">
    <property type="glycosylation" value="1 site"/>
</dbReference>
<dbReference type="iPTMnet" id="Q3UHC2"/>
<dbReference type="PhosphoSitePlus" id="Q3UHC2"/>
<dbReference type="PaxDb" id="10090-ENSMUSP00000015277"/>
<dbReference type="PeptideAtlas" id="Q3UHC2"/>
<dbReference type="ProteomicsDB" id="252527">
    <molecule id="Q3UHC2-1"/>
</dbReference>
<dbReference type="ProteomicsDB" id="252528">
    <molecule id="Q3UHC2-2"/>
</dbReference>
<dbReference type="ProteomicsDB" id="252529">
    <molecule id="Q3UHC2-3"/>
</dbReference>
<dbReference type="Pumba" id="Q3UHC2"/>
<dbReference type="ABCD" id="Q3UHC2">
    <property type="antibodies" value="2 sequenced antibodies"/>
</dbReference>
<dbReference type="Antibodypedia" id="2085">
    <property type="antibodies" value="202 antibodies from 29 providers"/>
</dbReference>
<dbReference type="DNASU" id="233328"/>
<dbReference type="Ensembl" id="ENSMUST00000015277.14">
    <molecule id="Q3UHC2-1"/>
    <property type="protein sequence ID" value="ENSMUSP00000015277.8"/>
    <property type="gene ID" value="ENSMUSG00000015133.18"/>
</dbReference>
<dbReference type="GeneID" id="233328"/>
<dbReference type="KEGG" id="mmu:233328"/>
<dbReference type="UCSC" id="uc009hhc.1">
    <molecule id="Q3UHC2-2"/>
    <property type="organism name" value="mouse"/>
</dbReference>
<dbReference type="UCSC" id="uc009hhd.1">
    <molecule id="Q3UHC2-1"/>
    <property type="organism name" value="mouse"/>
</dbReference>
<dbReference type="AGR" id="MGI:2142227"/>
<dbReference type="CTD" id="79705"/>
<dbReference type="MGI" id="MGI:2142227">
    <property type="gene designation" value="Lrrk1"/>
</dbReference>
<dbReference type="VEuPathDB" id="HostDB:ENSMUSG00000015133"/>
<dbReference type="eggNOG" id="KOG0192">
    <property type="taxonomic scope" value="Eukaryota"/>
</dbReference>
<dbReference type="eggNOG" id="KOG0619">
    <property type="taxonomic scope" value="Eukaryota"/>
</dbReference>
<dbReference type="GeneTree" id="ENSGT00940000160363"/>
<dbReference type="HOGENOM" id="CLU_001731_0_0_1"/>
<dbReference type="InParanoid" id="Q3UHC2"/>
<dbReference type="OMA" id="GEEVIWC"/>
<dbReference type="PhylomeDB" id="Q3UHC2"/>
<dbReference type="TreeFam" id="TF313679"/>
<dbReference type="BioGRID-ORCS" id="233328">
    <property type="hits" value="2 hits in 81 CRISPR screens"/>
</dbReference>
<dbReference type="ChiTaRS" id="Lrrk1">
    <property type="organism name" value="mouse"/>
</dbReference>
<dbReference type="PRO" id="PR:Q3UHC2"/>
<dbReference type="Proteomes" id="UP000000589">
    <property type="component" value="Chromosome 7"/>
</dbReference>
<dbReference type="RNAct" id="Q3UHC2">
    <property type="molecule type" value="protein"/>
</dbReference>
<dbReference type="Bgee" id="ENSMUSG00000015133">
    <property type="expression patterns" value="Expressed in right lung lobe and 197 other cell types or tissues"/>
</dbReference>
<dbReference type="ExpressionAtlas" id="Q3UHC2">
    <property type="expression patterns" value="baseline and differential"/>
</dbReference>
<dbReference type="GO" id="GO:0005829">
    <property type="term" value="C:cytosol"/>
    <property type="evidence" value="ECO:0007669"/>
    <property type="project" value="Ensembl"/>
</dbReference>
<dbReference type="GO" id="GO:0005739">
    <property type="term" value="C:mitochondrion"/>
    <property type="evidence" value="ECO:0007669"/>
    <property type="project" value="Ensembl"/>
</dbReference>
<dbReference type="GO" id="GO:0005886">
    <property type="term" value="C:plasma membrane"/>
    <property type="evidence" value="ECO:0007669"/>
    <property type="project" value="UniProtKB-SubCell"/>
</dbReference>
<dbReference type="GO" id="GO:0005524">
    <property type="term" value="F:ATP binding"/>
    <property type="evidence" value="ECO:0007669"/>
    <property type="project" value="UniProtKB-KW"/>
</dbReference>
<dbReference type="GO" id="GO:0005525">
    <property type="term" value="F:GTP binding"/>
    <property type="evidence" value="ECO:0007669"/>
    <property type="project" value="UniProtKB-KW"/>
</dbReference>
<dbReference type="GO" id="GO:0042802">
    <property type="term" value="F:identical protein binding"/>
    <property type="evidence" value="ECO:0007669"/>
    <property type="project" value="Ensembl"/>
</dbReference>
<dbReference type="GO" id="GO:0046872">
    <property type="term" value="F:metal ion binding"/>
    <property type="evidence" value="ECO:0007669"/>
    <property type="project" value="UniProtKB-KW"/>
</dbReference>
<dbReference type="GO" id="GO:0106310">
    <property type="term" value="F:protein serine kinase activity"/>
    <property type="evidence" value="ECO:0007669"/>
    <property type="project" value="RHEA"/>
</dbReference>
<dbReference type="GO" id="GO:0004674">
    <property type="term" value="F:protein serine/threonine kinase activity"/>
    <property type="evidence" value="ECO:0007669"/>
    <property type="project" value="UniProtKB-KW"/>
</dbReference>
<dbReference type="GO" id="GO:0045453">
    <property type="term" value="P:bone resorption"/>
    <property type="evidence" value="ECO:0000315"/>
    <property type="project" value="MGI"/>
</dbReference>
<dbReference type="GO" id="GO:0035556">
    <property type="term" value="P:intracellular signal transduction"/>
    <property type="evidence" value="ECO:0000316"/>
    <property type="project" value="MGI"/>
</dbReference>
<dbReference type="GO" id="GO:0036035">
    <property type="term" value="P:osteoclast development"/>
    <property type="evidence" value="ECO:0000315"/>
    <property type="project" value="MGI"/>
</dbReference>
<dbReference type="GO" id="GO:0090263">
    <property type="term" value="P:positive regulation of canonical Wnt signaling pathway"/>
    <property type="evidence" value="ECO:0007669"/>
    <property type="project" value="Ensembl"/>
</dbReference>
<dbReference type="GO" id="GO:1902533">
    <property type="term" value="P:positive regulation of intracellular signal transduction"/>
    <property type="evidence" value="ECO:0000316"/>
    <property type="project" value="MGI"/>
</dbReference>
<dbReference type="CDD" id="cd14067">
    <property type="entry name" value="STKc_LRRK1"/>
    <property type="match status" value="1"/>
</dbReference>
<dbReference type="FunFam" id="1.10.510.10:FF:000361">
    <property type="entry name" value="Leucine-rich repeat serine/threonine-protein kinase 1"/>
    <property type="match status" value="1"/>
</dbReference>
<dbReference type="FunFam" id="3.30.70.1390:FF:000002">
    <property type="entry name" value="Leucine-rich repeat serine/threonine-protein kinase 1"/>
    <property type="match status" value="1"/>
</dbReference>
<dbReference type="FunFam" id="3.40.50.300:FF:000698">
    <property type="entry name" value="Leucine-rich repeat serine/threonine-protein kinase 1"/>
    <property type="match status" value="1"/>
</dbReference>
<dbReference type="FunFam" id="3.80.10.10:FF:000971">
    <property type="entry name" value="Leucine-rich repeat serine/threonine-protein kinase 1"/>
    <property type="match status" value="1"/>
</dbReference>
<dbReference type="FunFam" id="1.25.40.20:FF:000138">
    <property type="entry name" value="leucine-rich repeat serine/threonine-protein kinase 1"/>
    <property type="match status" value="1"/>
</dbReference>
<dbReference type="FunFam" id="3.80.10.10:FF:000091">
    <property type="entry name" value="leucine-rich repeat serine/threonine-protein kinase 1"/>
    <property type="match status" value="1"/>
</dbReference>
<dbReference type="FunFam" id="3.80.10.10:FF:000210">
    <property type="entry name" value="leucine-rich repeat serine/threonine-protein kinase 1"/>
    <property type="match status" value="1"/>
</dbReference>
<dbReference type="Gene3D" id="1.25.40.20">
    <property type="entry name" value="Ankyrin repeat-containing domain"/>
    <property type="match status" value="1"/>
</dbReference>
<dbReference type="Gene3D" id="3.40.50.300">
    <property type="entry name" value="P-loop containing nucleotide triphosphate hydrolases"/>
    <property type="match status" value="1"/>
</dbReference>
<dbReference type="Gene3D" id="3.80.10.10">
    <property type="entry name" value="Ribonuclease Inhibitor"/>
    <property type="match status" value="3"/>
</dbReference>
<dbReference type="Gene3D" id="3.30.70.1390">
    <property type="entry name" value="ROC domain from the Parkinson's disease-associated leucine-rich repeat kinase 2"/>
    <property type="match status" value="1"/>
</dbReference>
<dbReference type="Gene3D" id="1.10.510.10">
    <property type="entry name" value="Transferase(Phosphotransferase) domain 1"/>
    <property type="match status" value="1"/>
</dbReference>
<dbReference type="InterPro" id="IPR002110">
    <property type="entry name" value="Ankyrin_rpt"/>
</dbReference>
<dbReference type="InterPro" id="IPR036770">
    <property type="entry name" value="Ankyrin_rpt-contain_sf"/>
</dbReference>
<dbReference type="InterPro" id="IPR032171">
    <property type="entry name" value="COR-A"/>
</dbReference>
<dbReference type="InterPro" id="IPR011009">
    <property type="entry name" value="Kinase-like_dom_sf"/>
</dbReference>
<dbReference type="InterPro" id="IPR001611">
    <property type="entry name" value="Leu-rich_rpt"/>
</dbReference>
<dbReference type="InterPro" id="IPR003591">
    <property type="entry name" value="Leu-rich_rpt_typical-subtyp"/>
</dbReference>
<dbReference type="InterPro" id="IPR032675">
    <property type="entry name" value="LRR_dom_sf"/>
</dbReference>
<dbReference type="InterPro" id="IPR027417">
    <property type="entry name" value="P-loop_NTPase"/>
</dbReference>
<dbReference type="InterPro" id="IPR050647">
    <property type="entry name" value="Plant_LRR-RLKs"/>
</dbReference>
<dbReference type="InterPro" id="IPR000719">
    <property type="entry name" value="Prot_kinase_dom"/>
</dbReference>
<dbReference type="InterPro" id="IPR011044">
    <property type="entry name" value="Quino_amine_DH_bsu"/>
</dbReference>
<dbReference type="InterPro" id="IPR020859">
    <property type="entry name" value="ROC"/>
</dbReference>
<dbReference type="PANTHER" id="PTHR48056">
    <property type="entry name" value="LRR RECEPTOR-LIKE SERINE/THREONINE-PROTEIN KINASE-RELATED"/>
    <property type="match status" value="1"/>
</dbReference>
<dbReference type="PANTHER" id="PTHR48056:SF81">
    <property type="entry name" value="RECEPTOR PROTEIN-TYROSINE KINASE CEPR1"/>
    <property type="match status" value="1"/>
</dbReference>
<dbReference type="Pfam" id="PF12796">
    <property type="entry name" value="Ank_2"/>
    <property type="match status" value="1"/>
</dbReference>
<dbReference type="Pfam" id="PF16095">
    <property type="entry name" value="COR-A"/>
    <property type="match status" value="1"/>
</dbReference>
<dbReference type="Pfam" id="PF25497">
    <property type="entry name" value="COR-B"/>
    <property type="match status" value="1"/>
</dbReference>
<dbReference type="Pfam" id="PF00560">
    <property type="entry name" value="LRR_1"/>
    <property type="match status" value="1"/>
</dbReference>
<dbReference type="Pfam" id="PF13855">
    <property type="entry name" value="LRR_8"/>
    <property type="match status" value="1"/>
</dbReference>
<dbReference type="Pfam" id="PF00069">
    <property type="entry name" value="Pkinase"/>
    <property type="match status" value="1"/>
</dbReference>
<dbReference type="Pfam" id="PF08477">
    <property type="entry name" value="Roc"/>
    <property type="match status" value="1"/>
</dbReference>
<dbReference type="SMART" id="SM00248">
    <property type="entry name" value="ANK"/>
    <property type="match status" value="4"/>
</dbReference>
<dbReference type="SMART" id="SM00364">
    <property type="entry name" value="LRR_BAC"/>
    <property type="match status" value="9"/>
</dbReference>
<dbReference type="SMART" id="SM00369">
    <property type="entry name" value="LRR_TYP"/>
    <property type="match status" value="8"/>
</dbReference>
<dbReference type="SMART" id="SM00220">
    <property type="entry name" value="S_TKc"/>
    <property type="match status" value="1"/>
</dbReference>
<dbReference type="SUPFAM" id="SSF48403">
    <property type="entry name" value="Ankyrin repeat"/>
    <property type="match status" value="1"/>
</dbReference>
<dbReference type="SUPFAM" id="SSF52058">
    <property type="entry name" value="L domain-like"/>
    <property type="match status" value="1"/>
</dbReference>
<dbReference type="SUPFAM" id="SSF52540">
    <property type="entry name" value="P-loop containing nucleoside triphosphate hydrolases"/>
    <property type="match status" value="1"/>
</dbReference>
<dbReference type="SUPFAM" id="SSF56112">
    <property type="entry name" value="Protein kinase-like (PK-like)"/>
    <property type="match status" value="1"/>
</dbReference>
<dbReference type="SUPFAM" id="SSF50969">
    <property type="entry name" value="YVTN repeat-like/Quinoprotein amine dehydrogenase"/>
    <property type="match status" value="1"/>
</dbReference>
<dbReference type="PROSITE" id="PS50297">
    <property type="entry name" value="ANK_REP_REGION"/>
    <property type="match status" value="1"/>
</dbReference>
<dbReference type="PROSITE" id="PS51450">
    <property type="entry name" value="LRR"/>
    <property type="match status" value="11"/>
</dbReference>
<dbReference type="PROSITE" id="PS50011">
    <property type="entry name" value="PROTEIN_KINASE_DOM"/>
    <property type="match status" value="1"/>
</dbReference>
<dbReference type="PROSITE" id="PS51424">
    <property type="entry name" value="ROC"/>
    <property type="match status" value="1"/>
</dbReference>
<protein>
    <recommendedName>
        <fullName>Leucine-rich repeat serine/threonine-protein kinase 1</fullName>
        <ecNumber evidence="1">2.7.11.1</ecNumber>
    </recommendedName>
</protein>